<name>FTSY_MYCPN</name>
<feature type="chain" id="PRO_0000101137" description="Signal recognition particle receptor FtsY">
    <location>
        <begin position="1"/>
        <end position="348"/>
    </location>
</feature>
<feature type="binding site" evidence="1">
    <location>
        <begin position="143"/>
        <end position="150"/>
    </location>
    <ligand>
        <name>GTP</name>
        <dbReference type="ChEBI" id="CHEBI:37565"/>
    </ligand>
</feature>
<feature type="binding site" evidence="1">
    <location>
        <begin position="225"/>
        <end position="229"/>
    </location>
    <ligand>
        <name>GTP</name>
        <dbReference type="ChEBI" id="CHEBI:37565"/>
    </ligand>
</feature>
<feature type="binding site" evidence="1">
    <location>
        <begin position="289"/>
        <end position="292"/>
    </location>
    <ligand>
        <name>GTP</name>
        <dbReference type="ChEBI" id="CHEBI:37565"/>
    </ligand>
</feature>
<accession>P75362</accession>
<dbReference type="EC" id="3.6.5.4" evidence="1"/>
<dbReference type="EMBL" id="U00089">
    <property type="protein sequence ID" value="AAB96064.1"/>
    <property type="molecule type" value="Genomic_DNA"/>
</dbReference>
<dbReference type="PIR" id="S73742">
    <property type="entry name" value="S73742"/>
</dbReference>
<dbReference type="RefSeq" id="NP_110113.1">
    <property type="nucleotide sequence ID" value="NC_000912.1"/>
</dbReference>
<dbReference type="RefSeq" id="WP_010874781.1">
    <property type="nucleotide sequence ID" value="NZ_OU342337.1"/>
</dbReference>
<dbReference type="SMR" id="P75362"/>
<dbReference type="STRING" id="272634.MPN_425"/>
<dbReference type="EnsemblBacteria" id="AAB96064">
    <property type="protein sequence ID" value="AAB96064"/>
    <property type="gene ID" value="MPN_425"/>
</dbReference>
<dbReference type="GeneID" id="66608908"/>
<dbReference type="KEGG" id="mpn:MPN_425"/>
<dbReference type="PATRIC" id="fig|272634.6.peg.460"/>
<dbReference type="HOGENOM" id="CLU_009301_3_0_14"/>
<dbReference type="OrthoDB" id="9804720at2"/>
<dbReference type="BioCyc" id="MPNE272634:G1GJ3-688-MONOMER"/>
<dbReference type="Proteomes" id="UP000000808">
    <property type="component" value="Chromosome"/>
</dbReference>
<dbReference type="GO" id="GO:0005737">
    <property type="term" value="C:cytoplasm"/>
    <property type="evidence" value="ECO:0007669"/>
    <property type="project" value="UniProtKB-SubCell"/>
</dbReference>
<dbReference type="GO" id="GO:0005886">
    <property type="term" value="C:plasma membrane"/>
    <property type="evidence" value="ECO:0007669"/>
    <property type="project" value="UniProtKB-SubCell"/>
</dbReference>
<dbReference type="GO" id="GO:0016887">
    <property type="term" value="F:ATP hydrolysis activity"/>
    <property type="evidence" value="ECO:0007669"/>
    <property type="project" value="InterPro"/>
</dbReference>
<dbReference type="GO" id="GO:0005525">
    <property type="term" value="F:GTP binding"/>
    <property type="evidence" value="ECO:0007669"/>
    <property type="project" value="UniProtKB-UniRule"/>
</dbReference>
<dbReference type="GO" id="GO:0003924">
    <property type="term" value="F:GTPase activity"/>
    <property type="evidence" value="ECO:0007669"/>
    <property type="project" value="UniProtKB-UniRule"/>
</dbReference>
<dbReference type="GO" id="GO:0005047">
    <property type="term" value="F:signal recognition particle binding"/>
    <property type="evidence" value="ECO:0007669"/>
    <property type="project" value="TreeGrafter"/>
</dbReference>
<dbReference type="GO" id="GO:0006614">
    <property type="term" value="P:SRP-dependent cotranslational protein targeting to membrane"/>
    <property type="evidence" value="ECO:0007669"/>
    <property type="project" value="InterPro"/>
</dbReference>
<dbReference type="FunFam" id="3.40.50.300:FF:000053">
    <property type="entry name" value="Signal recognition particle receptor FtsY"/>
    <property type="match status" value="1"/>
</dbReference>
<dbReference type="Gene3D" id="3.40.50.300">
    <property type="entry name" value="P-loop containing nucleotide triphosphate hydrolases"/>
    <property type="match status" value="1"/>
</dbReference>
<dbReference type="Gene3D" id="1.20.120.140">
    <property type="entry name" value="Signal recognition particle SRP54, nucleotide-binding domain"/>
    <property type="match status" value="1"/>
</dbReference>
<dbReference type="HAMAP" id="MF_00920">
    <property type="entry name" value="FtsY"/>
    <property type="match status" value="1"/>
</dbReference>
<dbReference type="InterPro" id="IPR003593">
    <property type="entry name" value="AAA+_ATPase"/>
</dbReference>
<dbReference type="InterPro" id="IPR027417">
    <property type="entry name" value="P-loop_NTPase"/>
</dbReference>
<dbReference type="InterPro" id="IPR013822">
    <property type="entry name" value="Signal_recog_particl_SRP54_hlx"/>
</dbReference>
<dbReference type="InterPro" id="IPR004390">
    <property type="entry name" value="SR_rcpt_FtsY"/>
</dbReference>
<dbReference type="InterPro" id="IPR036225">
    <property type="entry name" value="SRP/SRP_N"/>
</dbReference>
<dbReference type="InterPro" id="IPR000897">
    <property type="entry name" value="SRP54_GTPase_dom"/>
</dbReference>
<dbReference type="InterPro" id="IPR042101">
    <property type="entry name" value="SRP54_N_sf"/>
</dbReference>
<dbReference type="NCBIfam" id="TIGR00064">
    <property type="entry name" value="ftsY"/>
    <property type="match status" value="1"/>
</dbReference>
<dbReference type="PANTHER" id="PTHR43134">
    <property type="entry name" value="SIGNAL RECOGNITION PARTICLE RECEPTOR SUBUNIT ALPHA"/>
    <property type="match status" value="1"/>
</dbReference>
<dbReference type="PANTHER" id="PTHR43134:SF1">
    <property type="entry name" value="SIGNAL RECOGNITION PARTICLE RECEPTOR SUBUNIT ALPHA"/>
    <property type="match status" value="1"/>
</dbReference>
<dbReference type="Pfam" id="PF00448">
    <property type="entry name" value="SRP54"/>
    <property type="match status" value="1"/>
</dbReference>
<dbReference type="Pfam" id="PF02881">
    <property type="entry name" value="SRP54_N"/>
    <property type="match status" value="1"/>
</dbReference>
<dbReference type="SMART" id="SM00382">
    <property type="entry name" value="AAA"/>
    <property type="match status" value="1"/>
</dbReference>
<dbReference type="SMART" id="SM00962">
    <property type="entry name" value="SRP54"/>
    <property type="match status" value="1"/>
</dbReference>
<dbReference type="SMART" id="SM00963">
    <property type="entry name" value="SRP54_N"/>
    <property type="match status" value="1"/>
</dbReference>
<dbReference type="SUPFAM" id="SSF47364">
    <property type="entry name" value="Domain of the SRP/SRP receptor G-proteins"/>
    <property type="match status" value="1"/>
</dbReference>
<dbReference type="SUPFAM" id="SSF52540">
    <property type="entry name" value="P-loop containing nucleoside triphosphate hydrolases"/>
    <property type="match status" value="1"/>
</dbReference>
<dbReference type="PROSITE" id="PS00300">
    <property type="entry name" value="SRP54"/>
    <property type="match status" value="1"/>
</dbReference>
<evidence type="ECO:0000255" key="1">
    <source>
        <dbReference type="HAMAP-Rule" id="MF_00920"/>
    </source>
</evidence>
<protein>
    <recommendedName>
        <fullName evidence="1">Signal recognition particle receptor FtsY</fullName>
        <shortName evidence="1">SRP receptor</shortName>
        <ecNumber evidence="1">3.6.5.4</ecNumber>
    </recommendedName>
</protein>
<comment type="function">
    <text evidence="1">Involved in targeting and insertion of nascent membrane proteins into the cytoplasmic membrane. Acts as a receptor for the complex formed by the signal recognition particle (SRP) and the ribosome-nascent chain (RNC).</text>
</comment>
<comment type="catalytic activity">
    <reaction evidence="1">
        <text>GTP + H2O = GDP + phosphate + H(+)</text>
        <dbReference type="Rhea" id="RHEA:19669"/>
        <dbReference type="ChEBI" id="CHEBI:15377"/>
        <dbReference type="ChEBI" id="CHEBI:15378"/>
        <dbReference type="ChEBI" id="CHEBI:37565"/>
        <dbReference type="ChEBI" id="CHEBI:43474"/>
        <dbReference type="ChEBI" id="CHEBI:58189"/>
        <dbReference type="EC" id="3.6.5.4"/>
    </reaction>
</comment>
<comment type="subunit">
    <text evidence="1">Part of the signal recognition particle protein translocation system, which is composed of SRP and FtsY.</text>
</comment>
<comment type="subcellular location">
    <subcellularLocation>
        <location>Cell membrane</location>
        <topology>Peripheral membrane protein</topology>
        <orientation>Cytoplasmic side</orientation>
    </subcellularLocation>
    <subcellularLocation>
        <location evidence="1">Cytoplasm</location>
    </subcellularLocation>
</comment>
<comment type="similarity">
    <text evidence="1">Belongs to the GTP-binding SRP family. FtsY subfamily.</text>
</comment>
<sequence length="348" mass="38776">MSFIHKLIQKFKPKKKLVDQVQQAVQEKSFFQANQKSYYQGLNKSANSFANTINKLAANYVTVNEQFQESLFEELVLLDIGYHAATKICDAIVQELKLQRVSDPQLIQEIIVDKLIVYYIQDKLFETDLTVEANKTNVYLFVGVNGVGKTTSLAKLADQLTKQNKRVLMVAGDTFRAGAVAQLAEWAQRIGCDIVLPNPKEETPAVIFRGVQQGIQNEYDFVLCDTSGRLQNKTNLMNELKKIYQIVQKVSSAKPQETLLVLDGTTGQSGLAQAKVFNEFTELTGIILTKMDSSSKGGIILAIKDLFNLPVKLIGFGETTADLAAFDLEQYVLGLTKNLSLNHEPNQT</sequence>
<organism>
    <name type="scientific">Mycoplasma pneumoniae (strain ATCC 29342 / M129 / Subtype 1)</name>
    <name type="common">Mycoplasmoides pneumoniae</name>
    <dbReference type="NCBI Taxonomy" id="272634"/>
    <lineage>
        <taxon>Bacteria</taxon>
        <taxon>Bacillati</taxon>
        <taxon>Mycoplasmatota</taxon>
        <taxon>Mycoplasmoidales</taxon>
        <taxon>Mycoplasmoidaceae</taxon>
        <taxon>Mycoplasmoides</taxon>
    </lineage>
</organism>
<keyword id="KW-1003">Cell membrane</keyword>
<keyword id="KW-0963">Cytoplasm</keyword>
<keyword id="KW-0342">GTP-binding</keyword>
<keyword id="KW-0378">Hydrolase</keyword>
<keyword id="KW-0472">Membrane</keyword>
<keyword id="KW-0547">Nucleotide-binding</keyword>
<keyword id="KW-0675">Receptor</keyword>
<keyword id="KW-1185">Reference proteome</keyword>
<proteinExistence type="inferred from homology"/>
<gene>
    <name evidence="1" type="primary">ftsY</name>
    <name type="ordered locus">MPN_425</name>
    <name type="ORF">MP416</name>
</gene>
<reference key="1">
    <citation type="journal article" date="1996" name="Nucleic Acids Res.">
        <title>Complete sequence analysis of the genome of the bacterium Mycoplasma pneumoniae.</title>
        <authorList>
            <person name="Himmelreich R."/>
            <person name="Hilbert H."/>
            <person name="Plagens H."/>
            <person name="Pirkl E."/>
            <person name="Li B.-C."/>
            <person name="Herrmann R."/>
        </authorList>
    </citation>
    <scope>NUCLEOTIDE SEQUENCE [LARGE SCALE GENOMIC DNA]</scope>
    <source>
        <strain>ATCC 29342 / M129 / Subtype 1</strain>
    </source>
</reference>